<name>RS13_CLOBJ</name>
<proteinExistence type="inferred from homology"/>
<keyword id="KW-0687">Ribonucleoprotein</keyword>
<keyword id="KW-0689">Ribosomal protein</keyword>
<keyword id="KW-0694">RNA-binding</keyword>
<keyword id="KW-0699">rRNA-binding</keyword>
<keyword id="KW-0820">tRNA-binding</keyword>
<sequence length="123" mass="13975">MARISGIDLPKEKRVEIGLTYIYGIGLPTSQEILKATGVNPDTRVKDLSEEEVNAIRDYVNKNVKVEGDLRREIKLNIKRLVEIGSYRGIRHRRNLPVRGQKTKTNARTRKGPKRAIGGKKKK</sequence>
<dbReference type="EMBL" id="CP001581">
    <property type="protein sequence ID" value="ACO86571.1"/>
    <property type="molecule type" value="Genomic_DNA"/>
</dbReference>
<dbReference type="RefSeq" id="WP_003357564.1">
    <property type="nucleotide sequence ID" value="NC_012563.1"/>
</dbReference>
<dbReference type="SMR" id="C1FMS5"/>
<dbReference type="GeneID" id="92940224"/>
<dbReference type="KEGG" id="cby:CLM_3922"/>
<dbReference type="eggNOG" id="COG0099">
    <property type="taxonomic scope" value="Bacteria"/>
</dbReference>
<dbReference type="HOGENOM" id="CLU_103849_1_2_9"/>
<dbReference type="Proteomes" id="UP000001374">
    <property type="component" value="Chromosome"/>
</dbReference>
<dbReference type="GO" id="GO:0005829">
    <property type="term" value="C:cytosol"/>
    <property type="evidence" value="ECO:0007669"/>
    <property type="project" value="TreeGrafter"/>
</dbReference>
<dbReference type="GO" id="GO:0015935">
    <property type="term" value="C:small ribosomal subunit"/>
    <property type="evidence" value="ECO:0007669"/>
    <property type="project" value="TreeGrafter"/>
</dbReference>
<dbReference type="GO" id="GO:0019843">
    <property type="term" value="F:rRNA binding"/>
    <property type="evidence" value="ECO:0007669"/>
    <property type="project" value="UniProtKB-UniRule"/>
</dbReference>
<dbReference type="GO" id="GO:0003735">
    <property type="term" value="F:structural constituent of ribosome"/>
    <property type="evidence" value="ECO:0007669"/>
    <property type="project" value="InterPro"/>
</dbReference>
<dbReference type="GO" id="GO:0000049">
    <property type="term" value="F:tRNA binding"/>
    <property type="evidence" value="ECO:0007669"/>
    <property type="project" value="UniProtKB-UniRule"/>
</dbReference>
<dbReference type="GO" id="GO:0006412">
    <property type="term" value="P:translation"/>
    <property type="evidence" value="ECO:0007669"/>
    <property type="project" value="UniProtKB-UniRule"/>
</dbReference>
<dbReference type="FunFam" id="1.10.8.50:FF:000001">
    <property type="entry name" value="30S ribosomal protein S13"/>
    <property type="match status" value="1"/>
</dbReference>
<dbReference type="FunFam" id="4.10.910.10:FF:000001">
    <property type="entry name" value="30S ribosomal protein S13"/>
    <property type="match status" value="1"/>
</dbReference>
<dbReference type="Gene3D" id="1.10.8.50">
    <property type="match status" value="1"/>
</dbReference>
<dbReference type="Gene3D" id="4.10.910.10">
    <property type="entry name" value="30s ribosomal protein s13, domain 2"/>
    <property type="match status" value="1"/>
</dbReference>
<dbReference type="HAMAP" id="MF_01315">
    <property type="entry name" value="Ribosomal_uS13"/>
    <property type="match status" value="1"/>
</dbReference>
<dbReference type="InterPro" id="IPR027437">
    <property type="entry name" value="Rbsml_uS13_C"/>
</dbReference>
<dbReference type="InterPro" id="IPR001892">
    <property type="entry name" value="Ribosomal_uS13"/>
</dbReference>
<dbReference type="InterPro" id="IPR010979">
    <property type="entry name" value="Ribosomal_uS13-like_H2TH"/>
</dbReference>
<dbReference type="InterPro" id="IPR019980">
    <property type="entry name" value="Ribosomal_uS13_bac-type"/>
</dbReference>
<dbReference type="InterPro" id="IPR018269">
    <property type="entry name" value="Ribosomal_uS13_CS"/>
</dbReference>
<dbReference type="NCBIfam" id="TIGR03631">
    <property type="entry name" value="uS13_bact"/>
    <property type="match status" value="1"/>
</dbReference>
<dbReference type="PANTHER" id="PTHR10871">
    <property type="entry name" value="30S RIBOSOMAL PROTEIN S13/40S RIBOSOMAL PROTEIN S18"/>
    <property type="match status" value="1"/>
</dbReference>
<dbReference type="PANTHER" id="PTHR10871:SF1">
    <property type="entry name" value="SMALL RIBOSOMAL SUBUNIT PROTEIN US13M"/>
    <property type="match status" value="1"/>
</dbReference>
<dbReference type="Pfam" id="PF00416">
    <property type="entry name" value="Ribosomal_S13"/>
    <property type="match status" value="1"/>
</dbReference>
<dbReference type="PIRSF" id="PIRSF002134">
    <property type="entry name" value="Ribosomal_S13"/>
    <property type="match status" value="1"/>
</dbReference>
<dbReference type="SUPFAM" id="SSF46946">
    <property type="entry name" value="S13-like H2TH domain"/>
    <property type="match status" value="1"/>
</dbReference>
<dbReference type="PROSITE" id="PS00646">
    <property type="entry name" value="RIBOSOMAL_S13_1"/>
    <property type="match status" value="1"/>
</dbReference>
<dbReference type="PROSITE" id="PS50159">
    <property type="entry name" value="RIBOSOMAL_S13_2"/>
    <property type="match status" value="1"/>
</dbReference>
<protein>
    <recommendedName>
        <fullName evidence="1">Small ribosomal subunit protein uS13</fullName>
    </recommendedName>
    <alternativeName>
        <fullName evidence="3">30S ribosomal protein S13</fullName>
    </alternativeName>
</protein>
<evidence type="ECO:0000255" key="1">
    <source>
        <dbReference type="HAMAP-Rule" id="MF_01315"/>
    </source>
</evidence>
<evidence type="ECO:0000256" key="2">
    <source>
        <dbReference type="SAM" id="MobiDB-lite"/>
    </source>
</evidence>
<evidence type="ECO:0000305" key="3"/>
<gene>
    <name evidence="1" type="primary">rpsM</name>
    <name type="ordered locus">CLM_3922</name>
</gene>
<organism>
    <name type="scientific">Clostridium botulinum (strain Kyoto / Type A2)</name>
    <dbReference type="NCBI Taxonomy" id="536232"/>
    <lineage>
        <taxon>Bacteria</taxon>
        <taxon>Bacillati</taxon>
        <taxon>Bacillota</taxon>
        <taxon>Clostridia</taxon>
        <taxon>Eubacteriales</taxon>
        <taxon>Clostridiaceae</taxon>
        <taxon>Clostridium</taxon>
    </lineage>
</organism>
<comment type="function">
    <text evidence="1">Located at the top of the head of the 30S subunit, it contacts several helices of the 16S rRNA. In the 70S ribosome it contacts the 23S rRNA (bridge B1a) and protein L5 of the 50S subunit (bridge B1b), connecting the 2 subunits; these bridges are implicated in subunit movement. Contacts the tRNAs in the A and P-sites.</text>
</comment>
<comment type="subunit">
    <text evidence="1">Part of the 30S ribosomal subunit. Forms a loose heterodimer with protein S19. Forms two bridges to the 50S subunit in the 70S ribosome.</text>
</comment>
<comment type="similarity">
    <text evidence="1">Belongs to the universal ribosomal protein uS13 family.</text>
</comment>
<reference key="1">
    <citation type="submission" date="2008-10" db="EMBL/GenBank/DDBJ databases">
        <title>Genome sequence of Clostridium botulinum A2 Kyoto.</title>
        <authorList>
            <person name="Shrivastava S."/>
            <person name="Brinkac L.M."/>
            <person name="Brown J.L."/>
            <person name="Bruce D."/>
            <person name="Detter C.C."/>
            <person name="Johnson E.A."/>
            <person name="Munk C.A."/>
            <person name="Smith L.A."/>
            <person name="Smith T.J."/>
            <person name="Sutton G."/>
            <person name="Brettin T.S."/>
        </authorList>
    </citation>
    <scope>NUCLEOTIDE SEQUENCE [LARGE SCALE GENOMIC DNA]</scope>
    <source>
        <strain>Kyoto / Type A2</strain>
    </source>
</reference>
<feature type="chain" id="PRO_1000165612" description="Small ribosomal subunit protein uS13">
    <location>
        <begin position="1"/>
        <end position="123"/>
    </location>
</feature>
<feature type="region of interest" description="Disordered" evidence="2">
    <location>
        <begin position="93"/>
        <end position="123"/>
    </location>
</feature>
<accession>C1FMS5</accession>